<proteinExistence type="inferred from homology"/>
<feature type="chain" id="PRO_0000267688" description="3-octaprenyl-4-hydroxybenzoate carboxy-lyase">
    <location>
        <begin position="1"/>
        <end position="503"/>
    </location>
</feature>
<feature type="active site" description="Proton donor" evidence="1">
    <location>
        <position position="303"/>
    </location>
</feature>
<feature type="binding site" evidence="1">
    <location>
        <position position="176"/>
    </location>
    <ligand>
        <name>Mn(2+)</name>
        <dbReference type="ChEBI" id="CHEBI:29035"/>
    </ligand>
</feature>
<feature type="binding site" evidence="1">
    <location>
        <begin position="179"/>
        <end position="181"/>
    </location>
    <ligand>
        <name>prenylated FMN</name>
        <dbReference type="ChEBI" id="CHEBI:87746"/>
    </ligand>
</feature>
<feature type="binding site" evidence="1">
    <location>
        <begin position="193"/>
        <end position="195"/>
    </location>
    <ligand>
        <name>prenylated FMN</name>
        <dbReference type="ChEBI" id="CHEBI:87746"/>
    </ligand>
</feature>
<feature type="binding site" evidence="1">
    <location>
        <begin position="198"/>
        <end position="199"/>
    </location>
    <ligand>
        <name>prenylated FMN</name>
        <dbReference type="ChEBI" id="CHEBI:87746"/>
    </ligand>
</feature>
<feature type="binding site" evidence="1">
    <location>
        <position position="242"/>
    </location>
    <ligand>
        <name>Mn(2+)</name>
        <dbReference type="ChEBI" id="CHEBI:29035"/>
    </ligand>
</feature>
<dbReference type="EC" id="4.1.1.98" evidence="1"/>
<dbReference type="EMBL" id="AL646052">
    <property type="protein sequence ID" value="CAD14238.1"/>
    <property type="molecule type" value="Genomic_DNA"/>
</dbReference>
<dbReference type="RefSeq" id="WP_011000663.1">
    <property type="nucleotide sequence ID" value="NC_003295.1"/>
</dbReference>
<dbReference type="SMR" id="Q8Y1I2"/>
<dbReference type="STRING" id="267608.RSc0708"/>
<dbReference type="EnsemblBacteria" id="CAD14238">
    <property type="protein sequence ID" value="CAD14238"/>
    <property type="gene ID" value="RSc0708"/>
</dbReference>
<dbReference type="KEGG" id="rso:RSc0708"/>
<dbReference type="eggNOG" id="COG0043">
    <property type="taxonomic scope" value="Bacteria"/>
</dbReference>
<dbReference type="HOGENOM" id="CLU_023348_4_1_4"/>
<dbReference type="UniPathway" id="UPA00232"/>
<dbReference type="Proteomes" id="UP000001436">
    <property type="component" value="Chromosome"/>
</dbReference>
<dbReference type="GO" id="GO:0005829">
    <property type="term" value="C:cytosol"/>
    <property type="evidence" value="ECO:0007669"/>
    <property type="project" value="TreeGrafter"/>
</dbReference>
<dbReference type="GO" id="GO:0005886">
    <property type="term" value="C:plasma membrane"/>
    <property type="evidence" value="ECO:0007669"/>
    <property type="project" value="UniProtKB-SubCell"/>
</dbReference>
<dbReference type="GO" id="GO:0008694">
    <property type="term" value="F:3-octaprenyl-4-hydroxybenzoate carboxy-lyase activity"/>
    <property type="evidence" value="ECO:0007669"/>
    <property type="project" value="UniProtKB-UniRule"/>
</dbReference>
<dbReference type="GO" id="GO:0046872">
    <property type="term" value="F:metal ion binding"/>
    <property type="evidence" value="ECO:0007669"/>
    <property type="project" value="UniProtKB-KW"/>
</dbReference>
<dbReference type="GO" id="GO:0006744">
    <property type="term" value="P:ubiquinone biosynthetic process"/>
    <property type="evidence" value="ECO:0007669"/>
    <property type="project" value="UniProtKB-UniRule"/>
</dbReference>
<dbReference type="FunFam" id="3.40.1670.10:FF:000001">
    <property type="entry name" value="3-octaprenyl-4-hydroxybenzoate carboxy-lyase"/>
    <property type="match status" value="1"/>
</dbReference>
<dbReference type="Gene3D" id="1.20.5.570">
    <property type="entry name" value="Single helix bin"/>
    <property type="match status" value="1"/>
</dbReference>
<dbReference type="Gene3D" id="3.40.1670.10">
    <property type="entry name" value="UbiD C-terminal domain-like"/>
    <property type="match status" value="1"/>
</dbReference>
<dbReference type="HAMAP" id="MF_01636">
    <property type="entry name" value="UbiD"/>
    <property type="match status" value="1"/>
</dbReference>
<dbReference type="InterPro" id="IPR002830">
    <property type="entry name" value="UbiD"/>
</dbReference>
<dbReference type="InterPro" id="IPR049381">
    <property type="entry name" value="UbiD-like_C"/>
</dbReference>
<dbReference type="InterPro" id="IPR049383">
    <property type="entry name" value="UbiD-like_N"/>
</dbReference>
<dbReference type="InterPro" id="IPR023677">
    <property type="entry name" value="UbiD_bacteria"/>
</dbReference>
<dbReference type="InterPro" id="IPR048304">
    <property type="entry name" value="UbiD_Rift_dom"/>
</dbReference>
<dbReference type="NCBIfam" id="NF008175">
    <property type="entry name" value="PRK10922.1"/>
    <property type="match status" value="1"/>
</dbReference>
<dbReference type="NCBIfam" id="TIGR00148">
    <property type="entry name" value="UbiD family decarboxylase"/>
    <property type="match status" value="1"/>
</dbReference>
<dbReference type="PANTHER" id="PTHR30108">
    <property type="entry name" value="3-OCTAPRENYL-4-HYDROXYBENZOATE CARBOXY-LYASE-RELATED"/>
    <property type="match status" value="1"/>
</dbReference>
<dbReference type="PANTHER" id="PTHR30108:SF17">
    <property type="entry name" value="FERULIC ACID DECARBOXYLASE 1"/>
    <property type="match status" value="1"/>
</dbReference>
<dbReference type="Pfam" id="PF01977">
    <property type="entry name" value="UbiD"/>
    <property type="match status" value="1"/>
</dbReference>
<dbReference type="Pfam" id="PF20696">
    <property type="entry name" value="UbiD_C"/>
    <property type="match status" value="1"/>
</dbReference>
<dbReference type="Pfam" id="PF20695">
    <property type="entry name" value="UbiD_N"/>
    <property type="match status" value="1"/>
</dbReference>
<dbReference type="SUPFAM" id="SSF50475">
    <property type="entry name" value="FMN-binding split barrel"/>
    <property type="match status" value="1"/>
</dbReference>
<dbReference type="SUPFAM" id="SSF143968">
    <property type="entry name" value="UbiD C-terminal domain-like"/>
    <property type="match status" value="1"/>
</dbReference>
<sequence>MQYRDLRDFLAQLERIGELRRIRVPVSPRLEMTEVCDRLLRAEGPAVVFERPADGAQTYDMPVLANLFGTPRRVALGMGAESLDELRDVGRLLSALKEPEPPRGLREAGKLWTMAKAVWDMAPRKVSSPACQEIVLEGDDVDLSRIPVQTCWPGDAAPLVTWGLVVTRGPHKKRQNLGIYRQQVINRNQVIMRWLAHRGGALDFREHAIAHPGQPFPIAVALGADPATILGAVTPVPDTLSEYQFAGLLRGSRTELAQCLTPSLAQAQLQVPAGAEIVLEGHIQPDPAHPSGYQHALEGPFGDHTGYYNEQDWFPVFTVERITMRRDPIYHSTYTGKPPDEPAVLGVALNEVFVPLLQKQFPEIADFYLPPEGCSYRMALVSMKKQYAGHAKRVMFGVWSFLRQFMYTKFIVVVDDDVDLRDWKEVIWAITTRVDPARDTVMVENTPIDYLDFASPVSGLGSKMGIDATNKWPGETTREWGQPIVMDAAVKSRVDAMWETLFQ</sequence>
<protein>
    <recommendedName>
        <fullName evidence="1">3-octaprenyl-4-hydroxybenzoate carboxy-lyase</fullName>
        <ecNumber evidence="1">4.1.1.98</ecNumber>
    </recommendedName>
    <alternativeName>
        <fullName evidence="1">Polyprenyl p-hydroxybenzoate decarboxylase</fullName>
    </alternativeName>
</protein>
<keyword id="KW-1003">Cell membrane</keyword>
<keyword id="KW-0210">Decarboxylase</keyword>
<keyword id="KW-0285">Flavoprotein</keyword>
<keyword id="KW-0288">FMN</keyword>
<keyword id="KW-0456">Lyase</keyword>
<keyword id="KW-0464">Manganese</keyword>
<keyword id="KW-0472">Membrane</keyword>
<keyword id="KW-0479">Metal-binding</keyword>
<keyword id="KW-1185">Reference proteome</keyword>
<keyword id="KW-0831">Ubiquinone biosynthesis</keyword>
<comment type="function">
    <text evidence="1">Catalyzes the decarboxylation of 3-octaprenyl-4-hydroxy benzoate to 2-octaprenylphenol, an intermediate step in ubiquinone biosynthesis.</text>
</comment>
<comment type="catalytic activity">
    <reaction evidence="1">
        <text>a 4-hydroxy-3-(all-trans-polyprenyl)benzoate + H(+) = a 2-(all-trans-polyprenyl)phenol + CO2</text>
        <dbReference type="Rhea" id="RHEA:41680"/>
        <dbReference type="Rhea" id="RHEA-COMP:9514"/>
        <dbReference type="Rhea" id="RHEA-COMP:9516"/>
        <dbReference type="ChEBI" id="CHEBI:1269"/>
        <dbReference type="ChEBI" id="CHEBI:15378"/>
        <dbReference type="ChEBI" id="CHEBI:16526"/>
        <dbReference type="ChEBI" id="CHEBI:78396"/>
        <dbReference type="EC" id="4.1.1.98"/>
    </reaction>
</comment>
<comment type="cofactor">
    <cofactor evidence="1">
        <name>prenylated FMN</name>
        <dbReference type="ChEBI" id="CHEBI:87746"/>
    </cofactor>
    <text evidence="1">Binds 1 prenylated FMN per subunit.</text>
</comment>
<comment type="cofactor">
    <cofactor evidence="1">
        <name>Mn(2+)</name>
        <dbReference type="ChEBI" id="CHEBI:29035"/>
    </cofactor>
</comment>
<comment type="pathway">
    <text evidence="1">Cofactor biosynthesis; ubiquinone biosynthesis.</text>
</comment>
<comment type="subunit">
    <text evidence="1">Homohexamer.</text>
</comment>
<comment type="subcellular location">
    <subcellularLocation>
        <location evidence="1">Cell membrane</location>
        <topology evidence="1">Peripheral membrane protein</topology>
    </subcellularLocation>
</comment>
<comment type="similarity">
    <text evidence="1">Belongs to the UbiD family.</text>
</comment>
<accession>Q8Y1I2</accession>
<reference key="1">
    <citation type="journal article" date="2002" name="Nature">
        <title>Genome sequence of the plant pathogen Ralstonia solanacearum.</title>
        <authorList>
            <person name="Salanoubat M."/>
            <person name="Genin S."/>
            <person name="Artiguenave F."/>
            <person name="Gouzy J."/>
            <person name="Mangenot S."/>
            <person name="Arlat M."/>
            <person name="Billault A."/>
            <person name="Brottier P."/>
            <person name="Camus J.-C."/>
            <person name="Cattolico L."/>
            <person name="Chandler M."/>
            <person name="Choisne N."/>
            <person name="Claudel-Renard C."/>
            <person name="Cunnac S."/>
            <person name="Demange N."/>
            <person name="Gaspin C."/>
            <person name="Lavie M."/>
            <person name="Moisan A."/>
            <person name="Robert C."/>
            <person name="Saurin W."/>
            <person name="Schiex T."/>
            <person name="Siguier P."/>
            <person name="Thebault P."/>
            <person name="Whalen M."/>
            <person name="Wincker P."/>
            <person name="Levy M."/>
            <person name="Weissenbach J."/>
            <person name="Boucher C.A."/>
        </authorList>
    </citation>
    <scope>NUCLEOTIDE SEQUENCE [LARGE SCALE GENOMIC DNA]</scope>
    <source>
        <strain>ATCC BAA-1114 / GMI1000</strain>
    </source>
</reference>
<evidence type="ECO:0000255" key="1">
    <source>
        <dbReference type="HAMAP-Rule" id="MF_01636"/>
    </source>
</evidence>
<name>UBID_RALN1</name>
<gene>
    <name evidence="1" type="primary">ubiD</name>
    <name type="ordered locus">RSc0708</name>
</gene>
<organism>
    <name type="scientific">Ralstonia nicotianae (strain ATCC BAA-1114 / GMI1000)</name>
    <name type="common">Ralstonia solanacearum</name>
    <dbReference type="NCBI Taxonomy" id="267608"/>
    <lineage>
        <taxon>Bacteria</taxon>
        <taxon>Pseudomonadati</taxon>
        <taxon>Pseudomonadota</taxon>
        <taxon>Betaproteobacteria</taxon>
        <taxon>Burkholderiales</taxon>
        <taxon>Burkholderiaceae</taxon>
        <taxon>Ralstonia</taxon>
        <taxon>Ralstonia solanacearum species complex</taxon>
    </lineage>
</organism>